<accession>Q99288</accession>
<accession>D6VS38</accession>
<accession>P87337</accession>
<accession>Q05314</accession>
<accession>Q7LHX4</accession>
<evidence type="ECO:0000250" key="1"/>
<evidence type="ECO:0000250" key="2">
    <source>
        <dbReference type="UniProtKB" id="P62707"/>
    </source>
</evidence>
<evidence type="ECO:0000269" key="3">
    <source>
    </source>
</evidence>
<evidence type="ECO:0000269" key="4">
    <source>
    </source>
</evidence>
<evidence type="ECO:0000269" key="5">
    <source>
    </source>
</evidence>
<evidence type="ECO:0000269" key="6">
    <source>
    </source>
</evidence>
<evidence type="ECO:0000305" key="7"/>
<evidence type="ECO:0007744" key="8">
    <source>
    </source>
</evidence>
<feature type="chain" id="PRO_0000244436" description="Broad-range acid phosphatase DET1">
    <location>
        <begin position="1"/>
        <end position="334"/>
    </location>
</feature>
<feature type="active site" description="Tele-phosphohistidine intermediate" evidence="2">
    <location>
        <position position="32"/>
    </location>
</feature>
<feature type="active site" description="Proton donor/acceptor" evidence="2">
    <location>
        <position position="126"/>
    </location>
</feature>
<feature type="binding site" evidence="1">
    <location>
        <position position="38"/>
    </location>
    <ligand>
        <name>substrate</name>
    </ligand>
</feature>
<feature type="binding site" evidence="1">
    <location>
        <begin position="44"/>
        <end position="45"/>
    </location>
    <ligand>
        <name>substrate</name>
    </ligand>
</feature>
<feature type="binding site" evidence="1">
    <location>
        <position position="108"/>
    </location>
    <ligand>
        <name>substrate</name>
    </ligand>
</feature>
<feature type="binding site" evidence="1">
    <location>
        <begin position="168"/>
        <end position="171"/>
    </location>
    <ligand>
        <name>substrate</name>
    </ligand>
</feature>
<feature type="binding site" evidence="1">
    <location>
        <begin position="195"/>
        <end position="205"/>
    </location>
    <ligand>
        <name>substrate</name>
    </ligand>
</feature>
<feature type="modified residue" description="Phosphoserine" evidence="8">
    <location>
        <position position="248"/>
    </location>
</feature>
<name>DET1_YEAST</name>
<proteinExistence type="evidence at protein level"/>
<keyword id="KW-0963">Cytoplasm</keyword>
<keyword id="KW-0378">Hydrolase</keyword>
<keyword id="KW-0445">Lipid transport</keyword>
<keyword id="KW-0539">Nucleus</keyword>
<keyword id="KW-0597">Phosphoprotein</keyword>
<keyword id="KW-1185">Reference proteome</keyword>
<keyword id="KW-0813">Transport</keyword>
<protein>
    <recommendedName>
        <fullName>Broad-range acid phosphatase DET1</fullName>
        <ecNumber>3.1.3.-</ecNumber>
    </recommendedName>
    <alternativeName>
        <fullName>Decreased ergosterol transport protein 1</fullName>
    </alternativeName>
</protein>
<reference key="1">
    <citation type="journal article" date="1997" name="Nature">
        <title>The nucleotide sequence of Saccharomyces cerevisiae chromosome IV.</title>
        <authorList>
            <person name="Jacq C."/>
            <person name="Alt-Moerbe J."/>
            <person name="Andre B."/>
            <person name="Arnold W."/>
            <person name="Bahr A."/>
            <person name="Ballesta J.P.G."/>
            <person name="Bargues M."/>
            <person name="Baron L."/>
            <person name="Becker A."/>
            <person name="Biteau N."/>
            <person name="Bloecker H."/>
            <person name="Blugeon C."/>
            <person name="Boskovic J."/>
            <person name="Brandt P."/>
            <person name="Brueckner M."/>
            <person name="Buitrago M.J."/>
            <person name="Coster F."/>
            <person name="Delaveau T."/>
            <person name="del Rey F."/>
            <person name="Dujon B."/>
            <person name="Eide L.G."/>
            <person name="Garcia-Cantalejo J.M."/>
            <person name="Goffeau A."/>
            <person name="Gomez-Peris A."/>
            <person name="Granotier C."/>
            <person name="Hanemann V."/>
            <person name="Hankeln T."/>
            <person name="Hoheisel J.D."/>
            <person name="Jaeger W."/>
            <person name="Jimenez A."/>
            <person name="Jonniaux J.-L."/>
            <person name="Kraemer C."/>
            <person name="Kuester H."/>
            <person name="Laamanen P."/>
            <person name="Legros Y."/>
            <person name="Louis E.J."/>
            <person name="Moeller-Rieker S."/>
            <person name="Monnet A."/>
            <person name="Moro M."/>
            <person name="Mueller-Auer S."/>
            <person name="Nussbaumer B."/>
            <person name="Paricio N."/>
            <person name="Paulin L."/>
            <person name="Perea J."/>
            <person name="Perez-Alonso M."/>
            <person name="Perez-Ortin J.E."/>
            <person name="Pohl T.M."/>
            <person name="Prydz H."/>
            <person name="Purnelle B."/>
            <person name="Rasmussen S.W."/>
            <person name="Remacha M.A."/>
            <person name="Revuelta J.L."/>
            <person name="Rieger M."/>
            <person name="Salom D."/>
            <person name="Saluz H.P."/>
            <person name="Saiz J.E."/>
            <person name="Saren A.-M."/>
            <person name="Schaefer M."/>
            <person name="Scharfe M."/>
            <person name="Schmidt E.R."/>
            <person name="Schneider C."/>
            <person name="Scholler P."/>
            <person name="Schwarz S."/>
            <person name="Soler-Mira A."/>
            <person name="Urrestarazu L.A."/>
            <person name="Verhasselt P."/>
            <person name="Vissers S."/>
            <person name="Voet M."/>
            <person name="Volckaert G."/>
            <person name="Wagner G."/>
            <person name="Wambutt R."/>
            <person name="Wedler E."/>
            <person name="Wedler H."/>
            <person name="Woelfl S."/>
            <person name="Harris D.E."/>
            <person name="Bowman S."/>
            <person name="Brown D."/>
            <person name="Churcher C.M."/>
            <person name="Connor R."/>
            <person name="Dedman K."/>
            <person name="Gentles S."/>
            <person name="Hamlin N."/>
            <person name="Hunt S."/>
            <person name="Jones L."/>
            <person name="McDonald S."/>
            <person name="Murphy L.D."/>
            <person name="Niblett D."/>
            <person name="Odell C."/>
            <person name="Oliver K."/>
            <person name="Rajandream M.A."/>
            <person name="Richards C."/>
            <person name="Shore L."/>
            <person name="Walsh S.V."/>
            <person name="Barrell B.G."/>
            <person name="Dietrich F.S."/>
            <person name="Mulligan J.T."/>
            <person name="Allen E."/>
            <person name="Araujo R."/>
            <person name="Aviles E."/>
            <person name="Berno A."/>
            <person name="Carpenter J."/>
            <person name="Chen E."/>
            <person name="Cherry J.M."/>
            <person name="Chung E."/>
            <person name="Duncan M."/>
            <person name="Hunicke-Smith S."/>
            <person name="Hyman R.W."/>
            <person name="Komp C."/>
            <person name="Lashkari D."/>
            <person name="Lew H."/>
            <person name="Lin D."/>
            <person name="Mosedale D."/>
            <person name="Nakahara K."/>
            <person name="Namath A."/>
            <person name="Oefner P."/>
            <person name="Oh C."/>
            <person name="Petel F.X."/>
            <person name="Roberts D."/>
            <person name="Schramm S."/>
            <person name="Schroeder M."/>
            <person name="Shogren T."/>
            <person name="Shroff N."/>
            <person name="Winant A."/>
            <person name="Yelton M.A."/>
            <person name="Botstein D."/>
            <person name="Davis R.W."/>
            <person name="Johnston M."/>
            <person name="Andrews S."/>
            <person name="Brinkman R."/>
            <person name="Cooper J."/>
            <person name="Ding H."/>
            <person name="Du Z."/>
            <person name="Favello A."/>
            <person name="Fulton L."/>
            <person name="Gattung S."/>
            <person name="Greco T."/>
            <person name="Hallsworth K."/>
            <person name="Hawkins J."/>
            <person name="Hillier L.W."/>
            <person name="Jier M."/>
            <person name="Johnson D."/>
            <person name="Johnston L."/>
            <person name="Kirsten J."/>
            <person name="Kucaba T."/>
            <person name="Langston Y."/>
            <person name="Latreille P."/>
            <person name="Le T."/>
            <person name="Mardis E."/>
            <person name="Menezes S."/>
            <person name="Miller N."/>
            <person name="Nhan M."/>
            <person name="Pauley A."/>
            <person name="Peluso D."/>
            <person name="Rifkin L."/>
            <person name="Riles L."/>
            <person name="Taich A."/>
            <person name="Trevaskis E."/>
            <person name="Vignati D."/>
            <person name="Wilcox L."/>
            <person name="Wohldman P."/>
            <person name="Vaudin M."/>
            <person name="Wilson R."/>
            <person name="Waterston R."/>
            <person name="Albermann K."/>
            <person name="Hani J."/>
            <person name="Heumann K."/>
            <person name="Kleine K."/>
            <person name="Mewes H.-W."/>
            <person name="Zollner A."/>
            <person name="Zaccaria P."/>
        </authorList>
    </citation>
    <scope>NUCLEOTIDE SEQUENCE [LARGE SCALE GENOMIC DNA]</scope>
    <source>
        <strain>ATCC 204508 / S288c</strain>
    </source>
</reference>
<reference key="2">
    <citation type="journal article" date="2014" name="G3 (Bethesda)">
        <title>The reference genome sequence of Saccharomyces cerevisiae: Then and now.</title>
        <authorList>
            <person name="Engel S.R."/>
            <person name="Dietrich F.S."/>
            <person name="Fisk D.G."/>
            <person name="Binkley G."/>
            <person name="Balakrishnan R."/>
            <person name="Costanzo M.C."/>
            <person name="Dwight S.S."/>
            <person name="Hitz B.C."/>
            <person name="Karra K."/>
            <person name="Nash R.S."/>
            <person name="Weng S."/>
            <person name="Wong E.D."/>
            <person name="Lloyd P."/>
            <person name="Skrzypek M.S."/>
            <person name="Miyasato S.R."/>
            <person name="Simison M."/>
            <person name="Cherry J.M."/>
        </authorList>
    </citation>
    <scope>GENOME REANNOTATION</scope>
    <source>
        <strain>ATCC 204508 / S288c</strain>
    </source>
</reference>
<reference key="3">
    <citation type="journal article" date="1996" name="Yeast">
        <title>Nucleotide sequence analysis of a 32,500 bp region of the right arm of Saccharomyces cerevisiae chromosome IV.</title>
        <authorList>
            <person name="Brandt P."/>
            <person name="Ramlow S."/>
            <person name="Otto B."/>
            <person name="Bloecker H."/>
        </authorList>
    </citation>
    <scope>NUCLEOTIDE SEQUENCE [GENOMIC DNA] OF 1-154</scope>
</reference>
<reference key="4">
    <citation type="journal article" date="2003" name="Nature">
        <title>Global analysis of protein localization in budding yeast.</title>
        <authorList>
            <person name="Huh W.-K."/>
            <person name="Falvo J.V."/>
            <person name="Gerke L.C."/>
            <person name="Carroll A.S."/>
            <person name="Howson R.W."/>
            <person name="Weissman J.S."/>
            <person name="O'Shea E.K."/>
        </authorList>
    </citation>
    <scope>SUBCELLULAR LOCATION [LARGE SCALE ANALYSIS]</scope>
</reference>
<reference key="5">
    <citation type="journal article" date="2003" name="Nature">
        <title>Global analysis of protein expression in yeast.</title>
        <authorList>
            <person name="Ghaemmaghami S."/>
            <person name="Huh W.-K."/>
            <person name="Bower K."/>
            <person name="Howson R.W."/>
            <person name="Belle A."/>
            <person name="Dephoure N."/>
            <person name="O'Shea E.K."/>
            <person name="Weissman J.S."/>
        </authorList>
    </citation>
    <scope>LEVEL OF PROTEIN EXPRESSION [LARGE SCALE ANALYSIS]</scope>
</reference>
<reference key="6">
    <citation type="journal article" date="2008" name="Mol. Cell. Proteomics">
        <title>A multidimensional chromatography technology for in-depth phosphoproteome analysis.</title>
        <authorList>
            <person name="Albuquerque C.P."/>
            <person name="Smolka M.B."/>
            <person name="Payne S.H."/>
            <person name="Bafna V."/>
            <person name="Eng J."/>
            <person name="Zhou H."/>
        </authorList>
    </citation>
    <scope>PHOSPHORYLATION [LARGE SCALE ANALYSIS] AT SER-248</scope>
    <scope>IDENTIFICATION BY MASS SPECTROMETRY [LARGE SCALE ANALYSIS]</scope>
</reference>
<reference key="7">
    <citation type="journal article" date="2009" name="Eukaryot. Cell">
        <title>Tritium suicide selection identifies proteins involved in the uptake and intracellular transport of sterols in Saccharomyces cerevisiae.</title>
        <authorList>
            <person name="Sullivan D.P."/>
            <person name="Georgiev A."/>
            <person name="Menon A.K."/>
        </authorList>
    </citation>
    <scope>FUNCTION</scope>
</reference>
<reference key="8">
    <citation type="journal article" date="2009" name="PLoS ONE">
        <title>Identification of nucleases and phosphatases by direct biochemical screen of the Saccharomyces cerevisiae proteome.</title>
        <authorList>
            <person name="Ho C.K."/>
            <person name="Lam A.F."/>
            <person name="Symington L.S."/>
        </authorList>
    </citation>
    <scope>FUNCTION</scope>
    <scope>BIOPHYSICOCHEMICAL PROPERTIES</scope>
    <scope>SUBSTRATE SPECIFICITY</scope>
</reference>
<sequence length="334" mass="39172">MCEENVHVSEDVAGSHGSFTNARPRLIVLIRHGESESNKNKEVNGYIPNHLISLTKTGQIQARQAGIDLLRVLNVDDHNLVEDLAKKYIKDESSRRTLPLKDYTRLSREKDTNIVFYTSPYRRARETLKGILDVIDEYNELNSGVRICEDMRYDPHGKQKHAFWPRGLNNTGGVYENNEDNICEGKPGKCYLQYRVKDEPRIREQDFGNFQKINSMQDVMKKRSTYGHFFFRFPHGESAADVYDRVASFQETLFRHFHDRQERRPRDVVVLVTHGIYSRVFLMKWFRWTYEEFESFTNVPNGSVMVMELDESINRYVLRTVLPKWTDCEGDLTT</sequence>
<organism>
    <name type="scientific">Saccharomyces cerevisiae (strain ATCC 204508 / S288c)</name>
    <name type="common">Baker's yeast</name>
    <dbReference type="NCBI Taxonomy" id="559292"/>
    <lineage>
        <taxon>Eukaryota</taxon>
        <taxon>Fungi</taxon>
        <taxon>Dikarya</taxon>
        <taxon>Ascomycota</taxon>
        <taxon>Saccharomycotina</taxon>
        <taxon>Saccharomycetes</taxon>
        <taxon>Saccharomycetales</taxon>
        <taxon>Saccharomycetaceae</taxon>
        <taxon>Saccharomyces</taxon>
    </lineage>
</organism>
<comment type="function">
    <text evidence="5 6">Metal-independent, broad-range acid phosphatase. Involved, either directly or indirectly, in the bidirectional transport of sterols between the endoplasmic reticulum and the plasma membrane.</text>
</comment>
<comment type="biophysicochemical properties">
    <phDependence>
        <text evidence="6">Optimum pH is 4.5. Active from pH 4 to pH 5.5.</text>
    </phDependence>
</comment>
<comment type="subcellular location">
    <subcellularLocation>
        <location evidence="3">Cytoplasm</location>
    </subcellularLocation>
    <subcellularLocation>
        <location evidence="3">Nucleus</location>
    </subcellularLocation>
</comment>
<comment type="miscellaneous">
    <text evidence="4">Present with 3170 molecules/cell in log phase SD medium.</text>
</comment>
<comment type="similarity">
    <text evidence="7">Belongs to the phosphoglycerate mutase family.</text>
</comment>
<gene>
    <name type="primary">DET1</name>
    <name type="ordered locus">YDR051C</name>
    <name type="ORF">D4202</name>
</gene>
<dbReference type="EC" id="3.1.3.-"/>
<dbReference type="EMBL" id="Z49209">
    <property type="protein sequence ID" value="CAA89081.1"/>
    <property type="molecule type" value="Genomic_DNA"/>
</dbReference>
<dbReference type="EMBL" id="Z74347">
    <property type="protein sequence ID" value="CAA98868.1"/>
    <property type="molecule type" value="Genomic_DNA"/>
</dbReference>
<dbReference type="EMBL" id="Z74348">
    <property type="protein sequence ID" value="CAA98870.1"/>
    <property type="molecule type" value="Genomic_DNA"/>
</dbReference>
<dbReference type="EMBL" id="X84162">
    <property type="protein sequence ID" value="CAA58968.1"/>
    <property type="molecule type" value="Genomic_DNA"/>
</dbReference>
<dbReference type="EMBL" id="BK006938">
    <property type="protein sequence ID" value="DAA11898.1"/>
    <property type="molecule type" value="Genomic_DNA"/>
</dbReference>
<dbReference type="PIR" id="S54036">
    <property type="entry name" value="S54036"/>
</dbReference>
<dbReference type="RefSeq" id="NP_010336.3">
    <property type="nucleotide sequence ID" value="NM_001180359.3"/>
</dbReference>
<dbReference type="SMR" id="Q99288"/>
<dbReference type="BioGRID" id="32105">
    <property type="interactions" value="65"/>
</dbReference>
<dbReference type="DIP" id="DIP-1816N"/>
<dbReference type="FunCoup" id="Q99288">
    <property type="interactions" value="127"/>
</dbReference>
<dbReference type="IntAct" id="Q99288">
    <property type="interactions" value="17"/>
</dbReference>
<dbReference type="MINT" id="Q99288"/>
<dbReference type="STRING" id="4932.YDR051C"/>
<dbReference type="iPTMnet" id="Q99288"/>
<dbReference type="PaxDb" id="4932-YDR051C"/>
<dbReference type="PeptideAtlas" id="Q99288"/>
<dbReference type="EnsemblFungi" id="YDR051C_mRNA">
    <property type="protein sequence ID" value="YDR051C"/>
    <property type="gene ID" value="YDR051C"/>
</dbReference>
<dbReference type="GeneID" id="851621"/>
<dbReference type="KEGG" id="sce:YDR051C"/>
<dbReference type="AGR" id="SGD:S000002458"/>
<dbReference type="SGD" id="S000002458">
    <property type="gene designation" value="DET1"/>
</dbReference>
<dbReference type="VEuPathDB" id="FungiDB:YDR051C"/>
<dbReference type="eggNOG" id="ENOG502QQ8J">
    <property type="taxonomic scope" value="Eukaryota"/>
</dbReference>
<dbReference type="HOGENOM" id="CLU_033323_3_3_1"/>
<dbReference type="InParanoid" id="Q99288"/>
<dbReference type="OMA" id="MRLFCMR"/>
<dbReference type="OrthoDB" id="10261749at2759"/>
<dbReference type="BioCyc" id="YEAST:G3O-29661-MONOMER"/>
<dbReference type="BioGRID-ORCS" id="851621">
    <property type="hits" value="2 hits in 10 CRISPR screens"/>
</dbReference>
<dbReference type="PRO" id="PR:Q99288"/>
<dbReference type="Proteomes" id="UP000002311">
    <property type="component" value="Chromosome IV"/>
</dbReference>
<dbReference type="RNAct" id="Q99288">
    <property type="molecule type" value="protein"/>
</dbReference>
<dbReference type="GO" id="GO:0005737">
    <property type="term" value="C:cytoplasm"/>
    <property type="evidence" value="ECO:0007005"/>
    <property type="project" value="SGD"/>
</dbReference>
<dbReference type="GO" id="GO:0005634">
    <property type="term" value="C:nucleus"/>
    <property type="evidence" value="ECO:0007005"/>
    <property type="project" value="SGD"/>
</dbReference>
<dbReference type="GO" id="GO:0003993">
    <property type="term" value="F:acid phosphatase activity"/>
    <property type="evidence" value="ECO:0000314"/>
    <property type="project" value="SGD"/>
</dbReference>
<dbReference type="GO" id="GO:0016791">
    <property type="term" value="F:phosphatase activity"/>
    <property type="evidence" value="ECO:0000318"/>
    <property type="project" value="GO_Central"/>
</dbReference>
<dbReference type="GO" id="GO:0032366">
    <property type="term" value="P:intracellular sterol transport"/>
    <property type="evidence" value="ECO:0000315"/>
    <property type="project" value="SGD"/>
</dbReference>
<dbReference type="CDD" id="cd07067">
    <property type="entry name" value="HP_PGM_like"/>
    <property type="match status" value="1"/>
</dbReference>
<dbReference type="Gene3D" id="3.40.50.1240">
    <property type="entry name" value="Phosphoglycerate mutase-like"/>
    <property type="match status" value="1"/>
</dbReference>
<dbReference type="InterPro" id="IPR013078">
    <property type="entry name" value="His_Pase_superF_clade-1"/>
</dbReference>
<dbReference type="InterPro" id="IPR029033">
    <property type="entry name" value="His_PPase_superfam"/>
</dbReference>
<dbReference type="InterPro" id="IPR001345">
    <property type="entry name" value="PG/BPGM_mutase_AS"/>
</dbReference>
<dbReference type="InterPro" id="IPR052765">
    <property type="entry name" value="PGM-Related"/>
</dbReference>
<dbReference type="PANTHER" id="PTHR46192">
    <property type="entry name" value="BROAD-RANGE ACID PHOSPHATASE DET1"/>
    <property type="match status" value="1"/>
</dbReference>
<dbReference type="Pfam" id="PF00300">
    <property type="entry name" value="His_Phos_1"/>
    <property type="match status" value="1"/>
</dbReference>
<dbReference type="SMART" id="SM00855">
    <property type="entry name" value="PGAM"/>
    <property type="match status" value="1"/>
</dbReference>
<dbReference type="SUPFAM" id="SSF53254">
    <property type="entry name" value="Phosphoglycerate mutase-like"/>
    <property type="match status" value="1"/>
</dbReference>
<dbReference type="PROSITE" id="PS00175">
    <property type="entry name" value="PG_MUTASE"/>
    <property type="match status" value="1"/>
</dbReference>